<feature type="chain" id="PRO_1000097555" description="Queuine tRNA-ribosyltransferase">
    <location>
        <begin position="1"/>
        <end position="380"/>
    </location>
</feature>
<feature type="region of interest" description="RNA binding" evidence="1">
    <location>
        <begin position="245"/>
        <end position="251"/>
    </location>
</feature>
<feature type="region of interest" description="RNA binding; important for wobble base 34 recognition" evidence="1">
    <location>
        <begin position="269"/>
        <end position="273"/>
    </location>
</feature>
<feature type="active site" description="Proton acceptor" evidence="1">
    <location>
        <position position="89"/>
    </location>
</feature>
<feature type="active site" description="Nucleophile" evidence="1">
    <location>
        <position position="264"/>
    </location>
</feature>
<feature type="binding site" evidence="1">
    <location>
        <begin position="89"/>
        <end position="93"/>
    </location>
    <ligand>
        <name>substrate</name>
    </ligand>
</feature>
<feature type="binding site" evidence="1">
    <location>
        <position position="143"/>
    </location>
    <ligand>
        <name>substrate</name>
    </ligand>
</feature>
<feature type="binding site" evidence="1">
    <location>
        <position position="187"/>
    </location>
    <ligand>
        <name>substrate</name>
    </ligand>
</feature>
<feature type="binding site" evidence="1">
    <location>
        <position position="214"/>
    </location>
    <ligand>
        <name>substrate</name>
    </ligand>
</feature>
<feature type="binding site" evidence="1">
    <location>
        <position position="302"/>
    </location>
    <ligand>
        <name>Zn(2+)</name>
        <dbReference type="ChEBI" id="CHEBI:29105"/>
    </ligand>
</feature>
<feature type="binding site" evidence="1">
    <location>
        <position position="304"/>
    </location>
    <ligand>
        <name>Zn(2+)</name>
        <dbReference type="ChEBI" id="CHEBI:29105"/>
    </ligand>
</feature>
<feature type="binding site" evidence="1">
    <location>
        <position position="307"/>
    </location>
    <ligand>
        <name>Zn(2+)</name>
        <dbReference type="ChEBI" id="CHEBI:29105"/>
    </ligand>
</feature>
<feature type="binding site" evidence="1">
    <location>
        <position position="333"/>
    </location>
    <ligand>
        <name>Zn(2+)</name>
        <dbReference type="ChEBI" id="CHEBI:29105"/>
    </ligand>
</feature>
<sequence length="380" mass="43442">MKYELDKTDGHARRGRLKFERGVVETPAFMPVGTYGTVKGMTPEEVEATGAQILLGNTFHLWLRPGQEIMKLHGDLHDFMQWKGPILTDSGGFQVFSLGAMRKIKEEGVHFRNPINGEKIFLSPEKSMEIQYDLGSDIVMIFDECTPYPSDWDYAKNSMEMSLRWAKRSRQRFDELNNKNALFGIIQGGVYEDLRDISVKGLVEIGFDGYAVGGLAVGEPKEDMHRILEHVCPQIPADKPRYLMGVGKPEDLVEGVRRGIDMFDCVMPTRNARNGHLFVTNGVIKIRNAKHRSDTSTLDEHCDCYTCKNYSRAYLHHLDRCNEILGARLNTIHNLRYYQRLMAEIRQAIDESRFEDFVHEFYERIGKPVPPLNSSASKCD</sequence>
<reference key="1">
    <citation type="journal article" date="2008" name="J. Bacteriol.">
        <title>Complete genome sequence of uropathogenic Proteus mirabilis, a master of both adherence and motility.</title>
        <authorList>
            <person name="Pearson M.M."/>
            <person name="Sebaihia M."/>
            <person name="Churcher C."/>
            <person name="Quail M.A."/>
            <person name="Seshasayee A.S."/>
            <person name="Luscombe N.M."/>
            <person name="Abdellah Z."/>
            <person name="Arrosmith C."/>
            <person name="Atkin B."/>
            <person name="Chillingworth T."/>
            <person name="Hauser H."/>
            <person name="Jagels K."/>
            <person name="Moule S."/>
            <person name="Mungall K."/>
            <person name="Norbertczak H."/>
            <person name="Rabbinowitsch E."/>
            <person name="Walker D."/>
            <person name="Whithead S."/>
            <person name="Thomson N.R."/>
            <person name="Rather P.N."/>
            <person name="Parkhill J."/>
            <person name="Mobley H.L.T."/>
        </authorList>
    </citation>
    <scope>NUCLEOTIDE SEQUENCE [LARGE SCALE GENOMIC DNA]</scope>
    <source>
        <strain>HI4320</strain>
    </source>
</reference>
<accession>B4EU13</accession>
<comment type="function">
    <text evidence="1">Catalyzes the base-exchange of a guanine (G) residue with the queuine precursor 7-aminomethyl-7-deazaguanine (PreQ1) at position 34 (anticodon wobble position) in tRNAs with GU(N) anticodons (tRNA-Asp, -Asn, -His and -Tyr). Catalysis occurs through a double-displacement mechanism. The nucleophile active site attacks the C1' of nucleotide 34 to detach the guanine base from the RNA, forming a covalent enzyme-RNA intermediate. The proton acceptor active site deprotonates the incoming PreQ1, allowing a nucleophilic attack on the C1' of the ribose to form the product. After dissociation, two additional enzymatic reactions on the tRNA convert PreQ1 to queuine (Q), resulting in the hypermodified nucleoside queuosine (7-(((4,5-cis-dihydroxy-2-cyclopenten-1-yl)amino)methyl)-7-deazaguanosine).</text>
</comment>
<comment type="catalytic activity">
    <reaction evidence="1">
        <text>7-aminomethyl-7-carbaguanine + guanosine(34) in tRNA = 7-aminomethyl-7-carbaguanosine(34) in tRNA + guanine</text>
        <dbReference type="Rhea" id="RHEA:24104"/>
        <dbReference type="Rhea" id="RHEA-COMP:10341"/>
        <dbReference type="Rhea" id="RHEA-COMP:10342"/>
        <dbReference type="ChEBI" id="CHEBI:16235"/>
        <dbReference type="ChEBI" id="CHEBI:58703"/>
        <dbReference type="ChEBI" id="CHEBI:74269"/>
        <dbReference type="ChEBI" id="CHEBI:82833"/>
        <dbReference type="EC" id="2.4.2.29"/>
    </reaction>
</comment>
<comment type="cofactor">
    <cofactor evidence="1">
        <name>Zn(2+)</name>
        <dbReference type="ChEBI" id="CHEBI:29105"/>
    </cofactor>
    <text evidence="1">Binds 1 zinc ion per subunit.</text>
</comment>
<comment type="pathway">
    <text evidence="1">tRNA modification; tRNA-queuosine biosynthesis.</text>
</comment>
<comment type="subunit">
    <text evidence="1">Homodimer. Within each dimer, one monomer is responsible for RNA recognition and catalysis, while the other monomer binds to the replacement base PreQ1.</text>
</comment>
<comment type="similarity">
    <text evidence="1">Belongs to the queuine tRNA-ribosyltransferase family.</text>
</comment>
<proteinExistence type="inferred from homology"/>
<keyword id="KW-0328">Glycosyltransferase</keyword>
<keyword id="KW-0479">Metal-binding</keyword>
<keyword id="KW-0671">Queuosine biosynthesis</keyword>
<keyword id="KW-1185">Reference proteome</keyword>
<keyword id="KW-0808">Transferase</keyword>
<keyword id="KW-0819">tRNA processing</keyword>
<keyword id="KW-0862">Zinc</keyword>
<organism>
    <name type="scientific">Proteus mirabilis (strain HI4320)</name>
    <dbReference type="NCBI Taxonomy" id="529507"/>
    <lineage>
        <taxon>Bacteria</taxon>
        <taxon>Pseudomonadati</taxon>
        <taxon>Pseudomonadota</taxon>
        <taxon>Gammaproteobacteria</taxon>
        <taxon>Enterobacterales</taxon>
        <taxon>Morganellaceae</taxon>
        <taxon>Proteus</taxon>
    </lineage>
</organism>
<evidence type="ECO:0000255" key="1">
    <source>
        <dbReference type="HAMAP-Rule" id="MF_00168"/>
    </source>
</evidence>
<protein>
    <recommendedName>
        <fullName evidence="1">Queuine tRNA-ribosyltransferase</fullName>
        <ecNumber evidence="1">2.4.2.29</ecNumber>
    </recommendedName>
    <alternativeName>
        <fullName evidence="1">Guanine insertion enzyme</fullName>
    </alternativeName>
    <alternativeName>
        <fullName evidence="1">tRNA-guanine transglycosylase</fullName>
    </alternativeName>
</protein>
<dbReference type="EC" id="2.4.2.29" evidence="1"/>
<dbReference type="EMBL" id="AM942759">
    <property type="protein sequence ID" value="CAR40316.1"/>
    <property type="molecule type" value="Genomic_DNA"/>
</dbReference>
<dbReference type="RefSeq" id="WP_004245143.1">
    <property type="nucleotide sequence ID" value="NC_010554.1"/>
</dbReference>
<dbReference type="SMR" id="B4EU13"/>
<dbReference type="EnsemblBacteria" id="CAR40316">
    <property type="protein sequence ID" value="CAR40316"/>
    <property type="gene ID" value="PMI0076"/>
</dbReference>
<dbReference type="GeneID" id="6800451"/>
<dbReference type="KEGG" id="pmr:PMI0076"/>
<dbReference type="eggNOG" id="COG0343">
    <property type="taxonomic scope" value="Bacteria"/>
</dbReference>
<dbReference type="HOGENOM" id="CLU_022060_0_1_6"/>
<dbReference type="UniPathway" id="UPA00392"/>
<dbReference type="Proteomes" id="UP000008319">
    <property type="component" value="Chromosome"/>
</dbReference>
<dbReference type="GO" id="GO:0005829">
    <property type="term" value="C:cytosol"/>
    <property type="evidence" value="ECO:0007669"/>
    <property type="project" value="TreeGrafter"/>
</dbReference>
<dbReference type="GO" id="GO:0046872">
    <property type="term" value="F:metal ion binding"/>
    <property type="evidence" value="ECO:0007669"/>
    <property type="project" value="UniProtKB-KW"/>
</dbReference>
<dbReference type="GO" id="GO:0008479">
    <property type="term" value="F:tRNA-guanosine(34) queuine transglycosylase activity"/>
    <property type="evidence" value="ECO:0007669"/>
    <property type="project" value="UniProtKB-UniRule"/>
</dbReference>
<dbReference type="GO" id="GO:0008616">
    <property type="term" value="P:queuosine biosynthetic process"/>
    <property type="evidence" value="ECO:0007669"/>
    <property type="project" value="UniProtKB-UniRule"/>
</dbReference>
<dbReference type="GO" id="GO:0002099">
    <property type="term" value="P:tRNA wobble guanine modification"/>
    <property type="evidence" value="ECO:0007669"/>
    <property type="project" value="TreeGrafter"/>
</dbReference>
<dbReference type="GO" id="GO:0101030">
    <property type="term" value="P:tRNA-guanine transglycosylation"/>
    <property type="evidence" value="ECO:0007669"/>
    <property type="project" value="InterPro"/>
</dbReference>
<dbReference type="FunFam" id="3.20.20.105:FF:000001">
    <property type="entry name" value="Queuine tRNA-ribosyltransferase"/>
    <property type="match status" value="1"/>
</dbReference>
<dbReference type="Gene3D" id="3.20.20.105">
    <property type="entry name" value="Queuine tRNA-ribosyltransferase-like"/>
    <property type="match status" value="1"/>
</dbReference>
<dbReference type="HAMAP" id="MF_00168">
    <property type="entry name" value="Q_tRNA_Tgt"/>
    <property type="match status" value="1"/>
</dbReference>
<dbReference type="InterPro" id="IPR050076">
    <property type="entry name" value="ArchSynthase1/Queuine_TRR"/>
</dbReference>
<dbReference type="InterPro" id="IPR004803">
    <property type="entry name" value="TGT"/>
</dbReference>
<dbReference type="InterPro" id="IPR036511">
    <property type="entry name" value="TGT-like_sf"/>
</dbReference>
<dbReference type="InterPro" id="IPR002616">
    <property type="entry name" value="tRNA_ribo_trans-like"/>
</dbReference>
<dbReference type="NCBIfam" id="TIGR00430">
    <property type="entry name" value="Q_tRNA_tgt"/>
    <property type="match status" value="1"/>
</dbReference>
<dbReference type="NCBIfam" id="TIGR00449">
    <property type="entry name" value="tgt_general"/>
    <property type="match status" value="1"/>
</dbReference>
<dbReference type="PANTHER" id="PTHR46499">
    <property type="entry name" value="QUEUINE TRNA-RIBOSYLTRANSFERASE"/>
    <property type="match status" value="1"/>
</dbReference>
<dbReference type="PANTHER" id="PTHR46499:SF1">
    <property type="entry name" value="QUEUINE TRNA-RIBOSYLTRANSFERASE"/>
    <property type="match status" value="1"/>
</dbReference>
<dbReference type="Pfam" id="PF01702">
    <property type="entry name" value="TGT"/>
    <property type="match status" value="1"/>
</dbReference>
<dbReference type="SUPFAM" id="SSF51713">
    <property type="entry name" value="tRNA-guanine transglycosylase"/>
    <property type="match status" value="1"/>
</dbReference>
<name>TGT_PROMH</name>
<gene>
    <name evidence="1" type="primary">tgt</name>
    <name type="ordered locus">PMI0076</name>
</gene>